<dbReference type="EMBL" id="AABR03100834">
    <property type="status" value="NOT_ANNOTATED_CDS"/>
    <property type="molecule type" value="Genomic_DNA"/>
</dbReference>
<dbReference type="EMBL" id="AABR03100344">
    <property type="status" value="NOT_ANNOTATED_CDS"/>
    <property type="molecule type" value="Genomic_DNA"/>
</dbReference>
<dbReference type="RefSeq" id="NP_001102577.2">
    <property type="nucleotide sequence ID" value="NM_001109107.2"/>
</dbReference>
<dbReference type="SMR" id="P0C6B1"/>
<dbReference type="FunCoup" id="P0C6B1">
    <property type="interactions" value="2422"/>
</dbReference>
<dbReference type="STRING" id="10116.ENSRNOP00000016399"/>
<dbReference type="PhosphoSitePlus" id="P0C6B1"/>
<dbReference type="jPOST" id="P0C6B1"/>
<dbReference type="PaxDb" id="10116-ENSRNOP00000016399"/>
<dbReference type="Ensembl" id="ENSRNOT00000016399.7">
    <property type="protein sequence ID" value="ENSRNOP00000016399.7"/>
    <property type="gene ID" value="ENSRNOG00000012287.7"/>
</dbReference>
<dbReference type="GeneID" id="498599"/>
<dbReference type="KEGG" id="rno:498599"/>
<dbReference type="UCSC" id="RGD:1561342">
    <property type="organism name" value="rat"/>
</dbReference>
<dbReference type="AGR" id="RGD:1561342"/>
<dbReference type="CTD" id="79939"/>
<dbReference type="RGD" id="1561342">
    <property type="gene designation" value="Slc35e1"/>
</dbReference>
<dbReference type="eggNOG" id="KOG1441">
    <property type="taxonomic scope" value="Eukaryota"/>
</dbReference>
<dbReference type="GeneTree" id="ENSGT00940000159007"/>
<dbReference type="InParanoid" id="P0C6B1"/>
<dbReference type="OMA" id="FWYTVSS"/>
<dbReference type="OrthoDB" id="6418713at2759"/>
<dbReference type="PhylomeDB" id="P0C6B1"/>
<dbReference type="PRO" id="PR:P0C6B1"/>
<dbReference type="Proteomes" id="UP000002494">
    <property type="component" value="Chromosome 16"/>
</dbReference>
<dbReference type="GO" id="GO:0005794">
    <property type="term" value="C:Golgi apparatus"/>
    <property type="evidence" value="ECO:0000318"/>
    <property type="project" value="GO_Central"/>
</dbReference>
<dbReference type="GO" id="GO:0016020">
    <property type="term" value="C:membrane"/>
    <property type="evidence" value="ECO:0007669"/>
    <property type="project" value="UniProtKB-SubCell"/>
</dbReference>
<dbReference type="GO" id="GO:0015297">
    <property type="term" value="F:antiporter activity"/>
    <property type="evidence" value="ECO:0000318"/>
    <property type="project" value="GO_Central"/>
</dbReference>
<dbReference type="GO" id="GO:0055085">
    <property type="term" value="P:transmembrane transport"/>
    <property type="evidence" value="ECO:0000318"/>
    <property type="project" value="GO_Central"/>
</dbReference>
<dbReference type="InterPro" id="IPR004853">
    <property type="entry name" value="Sugar_P_trans_dom"/>
</dbReference>
<dbReference type="InterPro" id="IPR050186">
    <property type="entry name" value="TPT_transporter"/>
</dbReference>
<dbReference type="PANTHER" id="PTHR11132">
    <property type="entry name" value="SOLUTE CARRIER FAMILY 35"/>
    <property type="match status" value="1"/>
</dbReference>
<dbReference type="Pfam" id="PF03151">
    <property type="entry name" value="TPT"/>
    <property type="match status" value="1"/>
</dbReference>
<dbReference type="SUPFAM" id="SSF103481">
    <property type="entry name" value="Multidrug resistance efflux transporter EmrE"/>
    <property type="match status" value="2"/>
</dbReference>
<organism>
    <name type="scientific">Rattus norvegicus</name>
    <name type="common">Rat</name>
    <dbReference type="NCBI Taxonomy" id="10116"/>
    <lineage>
        <taxon>Eukaryota</taxon>
        <taxon>Metazoa</taxon>
        <taxon>Chordata</taxon>
        <taxon>Craniata</taxon>
        <taxon>Vertebrata</taxon>
        <taxon>Euteleostomi</taxon>
        <taxon>Mammalia</taxon>
        <taxon>Eutheria</taxon>
        <taxon>Euarchontoglires</taxon>
        <taxon>Glires</taxon>
        <taxon>Rodentia</taxon>
        <taxon>Myomorpha</taxon>
        <taxon>Muroidea</taxon>
        <taxon>Muridae</taxon>
        <taxon>Murinae</taxon>
        <taxon>Rattus</taxon>
    </lineage>
</organism>
<feature type="chain" id="PRO_0000319069" description="Solute carrier family 35 member E1">
    <location>
        <begin position="1"/>
        <end position="409"/>
    </location>
</feature>
<feature type="transmembrane region" description="Helical" evidence="3">
    <location>
        <begin position="50"/>
        <end position="70"/>
    </location>
</feature>
<feature type="transmembrane region" description="Helical" evidence="3">
    <location>
        <begin position="111"/>
        <end position="131"/>
    </location>
</feature>
<feature type="transmembrane region" description="Helical" evidence="3">
    <location>
        <begin position="133"/>
        <end position="153"/>
    </location>
</feature>
<feature type="transmembrane region" description="Helical" evidence="3">
    <location>
        <begin position="165"/>
        <end position="184"/>
    </location>
</feature>
<feature type="transmembrane region" description="Helical" evidence="3">
    <location>
        <begin position="188"/>
        <end position="207"/>
    </location>
</feature>
<feature type="transmembrane region" description="Helical" evidence="3">
    <location>
        <begin position="222"/>
        <end position="242"/>
    </location>
</feature>
<feature type="transmembrane region" description="Helical" evidence="3">
    <location>
        <begin position="252"/>
        <end position="274"/>
    </location>
</feature>
<feature type="transmembrane region" description="Helical" evidence="3">
    <location>
        <begin position="282"/>
        <end position="303"/>
    </location>
</feature>
<feature type="transmembrane region" description="Helical" evidence="3">
    <location>
        <begin position="312"/>
        <end position="332"/>
    </location>
</feature>
<feature type="modified residue" description="Phosphoserine" evidence="2">
    <location>
        <position position="363"/>
    </location>
</feature>
<proteinExistence type="inferred from homology"/>
<gene>
    <name type="primary">Slc35e1</name>
</gene>
<sequence length="409" mass="44384">MAAAAAAGPGAGAGIPGASGGGGAREGARVAALCLLWYALSAGGNVVNKVILSAFPFPVTVSLCHILALCAGLPPLLRAWRVPPAPPVSGPGPSPHPASGPLLPPRFYPRYVLPLAFGKYFASVSAHVSIWKVPVSYAHTVKATMPIWVVLLSRIIMKEKQSTKVYLSLVPIISGVLLATVTELSFDVWGLVSALAATLCFSLQNIFSKKVLRDSRIHHLRLLNILGCHAVFFMIPTWVLVDLSTFLVSSDLAYVSQWPWTLLLLVVSGFCNFAQNVIAFSILNLISPLSYSVANATKRIMVIAVSLIMLRNPVTSTNVLGMMTAILGVFLYNKTKYDANQQARRHLLPVSTSDLSNREHLRSPMEKPHNGALFPQQGDFQYRNILLTDHFQYSRQGHPNSYALSRHDV</sequence>
<reference key="1">
    <citation type="journal article" date="2004" name="Nature">
        <title>Genome sequence of the Brown Norway rat yields insights into mammalian evolution.</title>
        <authorList>
            <person name="Gibbs R.A."/>
            <person name="Weinstock G.M."/>
            <person name="Metzker M.L."/>
            <person name="Muzny D.M."/>
            <person name="Sodergren E.J."/>
            <person name="Scherer S."/>
            <person name="Scott G."/>
            <person name="Steffen D."/>
            <person name="Worley K.C."/>
            <person name="Burch P.E."/>
            <person name="Okwuonu G."/>
            <person name="Hines S."/>
            <person name="Lewis L."/>
            <person name="Deramo C."/>
            <person name="Delgado O."/>
            <person name="Dugan-Rocha S."/>
            <person name="Miner G."/>
            <person name="Morgan M."/>
            <person name="Hawes A."/>
            <person name="Gill R."/>
            <person name="Holt R.A."/>
            <person name="Adams M.D."/>
            <person name="Amanatides P.G."/>
            <person name="Baden-Tillson H."/>
            <person name="Barnstead M."/>
            <person name="Chin S."/>
            <person name="Evans C.A."/>
            <person name="Ferriera S."/>
            <person name="Fosler C."/>
            <person name="Glodek A."/>
            <person name="Gu Z."/>
            <person name="Jennings D."/>
            <person name="Kraft C.L."/>
            <person name="Nguyen T."/>
            <person name="Pfannkoch C.M."/>
            <person name="Sitter C."/>
            <person name="Sutton G.G."/>
            <person name="Venter J.C."/>
            <person name="Woodage T."/>
            <person name="Smith D."/>
            <person name="Lee H.-M."/>
            <person name="Gustafson E."/>
            <person name="Cahill P."/>
            <person name="Kana A."/>
            <person name="Doucette-Stamm L."/>
            <person name="Weinstock K."/>
            <person name="Fechtel K."/>
            <person name="Weiss R.B."/>
            <person name="Dunn D.M."/>
            <person name="Green E.D."/>
            <person name="Blakesley R.W."/>
            <person name="Bouffard G.G."/>
            <person name="De Jong P.J."/>
            <person name="Osoegawa K."/>
            <person name="Zhu B."/>
            <person name="Marra M."/>
            <person name="Schein J."/>
            <person name="Bosdet I."/>
            <person name="Fjell C."/>
            <person name="Jones S."/>
            <person name="Krzywinski M."/>
            <person name="Mathewson C."/>
            <person name="Siddiqui A."/>
            <person name="Wye N."/>
            <person name="McPherson J."/>
            <person name="Zhao S."/>
            <person name="Fraser C.M."/>
            <person name="Shetty J."/>
            <person name="Shatsman S."/>
            <person name="Geer K."/>
            <person name="Chen Y."/>
            <person name="Abramzon S."/>
            <person name="Nierman W.C."/>
            <person name="Havlak P.H."/>
            <person name="Chen R."/>
            <person name="Durbin K.J."/>
            <person name="Egan A."/>
            <person name="Ren Y."/>
            <person name="Song X.-Z."/>
            <person name="Li B."/>
            <person name="Liu Y."/>
            <person name="Qin X."/>
            <person name="Cawley S."/>
            <person name="Cooney A.J."/>
            <person name="D'Souza L.M."/>
            <person name="Martin K."/>
            <person name="Wu J.Q."/>
            <person name="Gonzalez-Garay M.L."/>
            <person name="Jackson A.R."/>
            <person name="Kalafus K.J."/>
            <person name="McLeod M.P."/>
            <person name="Milosavljevic A."/>
            <person name="Virk D."/>
            <person name="Volkov A."/>
            <person name="Wheeler D.A."/>
            <person name="Zhang Z."/>
            <person name="Bailey J.A."/>
            <person name="Eichler E.E."/>
            <person name="Tuzun E."/>
            <person name="Birney E."/>
            <person name="Mongin E."/>
            <person name="Ureta-Vidal A."/>
            <person name="Woodwark C."/>
            <person name="Zdobnov E."/>
            <person name="Bork P."/>
            <person name="Suyama M."/>
            <person name="Torrents D."/>
            <person name="Alexandersson M."/>
            <person name="Trask B.J."/>
            <person name="Young J.M."/>
            <person name="Huang H."/>
            <person name="Wang H."/>
            <person name="Xing H."/>
            <person name="Daniels S."/>
            <person name="Gietzen D."/>
            <person name="Schmidt J."/>
            <person name="Stevens K."/>
            <person name="Vitt U."/>
            <person name="Wingrove J."/>
            <person name="Camara F."/>
            <person name="Mar Alba M."/>
            <person name="Abril J.F."/>
            <person name="Guigo R."/>
            <person name="Smit A."/>
            <person name="Dubchak I."/>
            <person name="Rubin E.M."/>
            <person name="Couronne O."/>
            <person name="Poliakov A."/>
            <person name="Huebner N."/>
            <person name="Ganten D."/>
            <person name="Goesele C."/>
            <person name="Hummel O."/>
            <person name="Kreitler T."/>
            <person name="Lee Y.-A."/>
            <person name="Monti J."/>
            <person name="Schulz H."/>
            <person name="Zimdahl H."/>
            <person name="Himmelbauer H."/>
            <person name="Lehrach H."/>
            <person name="Jacob H.J."/>
            <person name="Bromberg S."/>
            <person name="Gullings-Handley J."/>
            <person name="Jensen-Seaman M.I."/>
            <person name="Kwitek A.E."/>
            <person name="Lazar J."/>
            <person name="Pasko D."/>
            <person name="Tonellato P.J."/>
            <person name="Twigger S."/>
            <person name="Ponting C.P."/>
            <person name="Duarte J.M."/>
            <person name="Rice S."/>
            <person name="Goodstadt L."/>
            <person name="Beatson S.A."/>
            <person name="Emes R.D."/>
            <person name="Winter E.E."/>
            <person name="Webber C."/>
            <person name="Brandt P."/>
            <person name="Nyakatura G."/>
            <person name="Adetobi M."/>
            <person name="Chiaromonte F."/>
            <person name="Elnitski L."/>
            <person name="Eswara P."/>
            <person name="Hardison R.C."/>
            <person name="Hou M."/>
            <person name="Kolbe D."/>
            <person name="Makova K."/>
            <person name="Miller W."/>
            <person name="Nekrutenko A."/>
            <person name="Riemer C."/>
            <person name="Schwartz S."/>
            <person name="Taylor J."/>
            <person name="Yang S."/>
            <person name="Zhang Y."/>
            <person name="Lindpaintner K."/>
            <person name="Andrews T.D."/>
            <person name="Caccamo M."/>
            <person name="Clamp M."/>
            <person name="Clarke L."/>
            <person name="Curwen V."/>
            <person name="Durbin R.M."/>
            <person name="Eyras E."/>
            <person name="Searle S.M."/>
            <person name="Cooper G.M."/>
            <person name="Batzoglou S."/>
            <person name="Brudno M."/>
            <person name="Sidow A."/>
            <person name="Stone E.A."/>
            <person name="Payseur B.A."/>
            <person name="Bourque G."/>
            <person name="Lopez-Otin C."/>
            <person name="Puente X.S."/>
            <person name="Chakrabarti K."/>
            <person name="Chatterji S."/>
            <person name="Dewey C."/>
            <person name="Pachter L."/>
            <person name="Bray N."/>
            <person name="Yap V.B."/>
            <person name="Caspi A."/>
            <person name="Tesler G."/>
            <person name="Pevzner P.A."/>
            <person name="Haussler D."/>
            <person name="Roskin K.M."/>
            <person name="Baertsch R."/>
            <person name="Clawson H."/>
            <person name="Furey T.S."/>
            <person name="Hinrichs A.S."/>
            <person name="Karolchik D."/>
            <person name="Kent W.J."/>
            <person name="Rosenbloom K.R."/>
            <person name="Trumbower H."/>
            <person name="Weirauch M."/>
            <person name="Cooper D.N."/>
            <person name="Stenson P.D."/>
            <person name="Ma B."/>
            <person name="Brent M."/>
            <person name="Arumugam M."/>
            <person name="Shteynberg D."/>
            <person name="Copley R.R."/>
            <person name="Taylor M.S."/>
            <person name="Riethman H."/>
            <person name="Mudunuri U."/>
            <person name="Peterson J."/>
            <person name="Guyer M."/>
            <person name="Felsenfeld A."/>
            <person name="Old S."/>
            <person name="Mockrin S."/>
            <person name="Collins F.S."/>
        </authorList>
    </citation>
    <scope>NUCLEOTIDE SEQUENCE [LARGE SCALE GENOMIC DNA]</scope>
    <source>
        <strain>Brown Norway</strain>
    </source>
</reference>
<name>S35E1_RAT</name>
<comment type="function">
    <text evidence="1">Putative transporter.</text>
</comment>
<comment type="subcellular location">
    <subcellularLocation>
        <location evidence="4">Membrane</location>
        <topology evidence="4">Multi-pass membrane protein</topology>
    </subcellularLocation>
</comment>
<comment type="similarity">
    <text evidence="4">Belongs to the TPT transporter family. SLC35E subfamily.</text>
</comment>
<accession>P0C6B1</accession>
<protein>
    <recommendedName>
        <fullName>Solute carrier family 35 member E1</fullName>
    </recommendedName>
</protein>
<keyword id="KW-0472">Membrane</keyword>
<keyword id="KW-0597">Phosphoprotein</keyword>
<keyword id="KW-1185">Reference proteome</keyword>
<keyword id="KW-0812">Transmembrane</keyword>
<keyword id="KW-1133">Transmembrane helix</keyword>
<keyword id="KW-0813">Transport</keyword>
<evidence type="ECO:0000250" key="1"/>
<evidence type="ECO:0000250" key="2">
    <source>
        <dbReference type="UniProtKB" id="Q96K37"/>
    </source>
</evidence>
<evidence type="ECO:0000255" key="3"/>
<evidence type="ECO:0000305" key="4"/>